<protein>
    <recommendedName>
        <fullName>Venom allergen 5.02</fullName>
    </recommendedName>
    <alternativeName>
        <fullName>Allergen Vesp c V.02</fullName>
    </alternativeName>
    <alternativeName>
        <fullName>Antigen 5-2</fullName>
        <shortName>Ag5-2</shortName>
    </alternativeName>
    <alternativeName>
        <fullName>Cysteine-rich venom protein</fullName>
        <shortName>CRVP</shortName>
    </alternativeName>
    <allergenName>Vesp c 5.02</allergenName>
</protein>
<comment type="subcellular location">
    <subcellularLocation>
        <location>Secreted</location>
    </subcellularLocation>
</comment>
<comment type="tissue specificity">
    <text>Expressed by the venom gland.</text>
</comment>
<comment type="allergen">
    <text>Causes an allergic reaction in human.</text>
</comment>
<comment type="similarity">
    <text evidence="2">Belongs to the CRISP family. Venom allergen 5-like subfamily.</text>
</comment>
<organism>
    <name type="scientific">Vespa crabro</name>
    <name type="common">European hornet</name>
    <dbReference type="NCBI Taxonomy" id="7445"/>
    <lineage>
        <taxon>Eukaryota</taxon>
        <taxon>Metazoa</taxon>
        <taxon>Ecdysozoa</taxon>
        <taxon>Arthropoda</taxon>
        <taxon>Hexapoda</taxon>
        <taxon>Insecta</taxon>
        <taxon>Pterygota</taxon>
        <taxon>Neoptera</taxon>
        <taxon>Endopterygota</taxon>
        <taxon>Hymenoptera</taxon>
        <taxon>Apocrita</taxon>
        <taxon>Aculeata</taxon>
        <taxon>Vespoidea</taxon>
        <taxon>Vespidae</taxon>
        <taxon>Vespinae</taxon>
        <taxon>Vespa</taxon>
    </lineage>
</organism>
<proteinExistence type="evidence at protein level"/>
<feature type="chain" id="PRO_0000211540" description="Venom allergen 5.02">
    <location>
        <begin position="1"/>
        <end position="202"/>
    </location>
</feature>
<feature type="domain" description="SCP">
    <location>
        <begin position="46"/>
        <end position="187"/>
    </location>
</feature>
<feature type="disulfide bond" evidence="1">
    <location>
        <begin position="4"/>
        <end position="16"/>
    </location>
</feature>
<feature type="disulfide bond" evidence="1">
    <location>
        <begin position="8"/>
        <end position="101"/>
    </location>
</feature>
<feature type="disulfide bond" evidence="1">
    <location>
        <begin position="26"/>
        <end position="94"/>
    </location>
</feature>
<feature type="disulfide bond" evidence="1">
    <location>
        <begin position="168"/>
        <end position="185"/>
    </location>
</feature>
<name>VA52_VESCR</name>
<keyword id="KW-0020">Allergen</keyword>
<keyword id="KW-0903">Direct protein sequencing</keyword>
<keyword id="KW-1015">Disulfide bond</keyword>
<keyword id="KW-0964">Secreted</keyword>
<reference key="1">
    <citation type="journal article" date="1993" name="J. Allergy Clin. Immunol.">
        <title>Allergens in Hymenoptera venom. XXV: the amino acid sequences of antigen 5 molecules and the structural basis of antigenic cross-reactivity.</title>
        <authorList>
            <person name="Hoffman D.R."/>
        </authorList>
    </citation>
    <scope>PROTEIN SEQUENCE</scope>
    <source>
        <tissue>Venom</tissue>
    </source>
</reference>
<evidence type="ECO:0000250" key="1"/>
<evidence type="ECO:0000305" key="2"/>
<accession>P35782</accession>
<dbReference type="PIR" id="H44583">
    <property type="entry name" value="H44583"/>
</dbReference>
<dbReference type="SMR" id="P35782"/>
<dbReference type="Allergome" id="673">
    <property type="allergen name" value="Vesp c 5"/>
</dbReference>
<dbReference type="Allergome" id="766">
    <property type="allergen name" value="Vesp c 5.0102"/>
</dbReference>
<dbReference type="GO" id="GO:0005576">
    <property type="term" value="C:extracellular region"/>
    <property type="evidence" value="ECO:0007669"/>
    <property type="project" value="UniProtKB-SubCell"/>
</dbReference>
<dbReference type="CDD" id="cd05380">
    <property type="entry name" value="CAP_euk"/>
    <property type="match status" value="1"/>
</dbReference>
<dbReference type="Gene3D" id="3.40.33.10">
    <property type="entry name" value="CAP"/>
    <property type="match status" value="1"/>
</dbReference>
<dbReference type="InterPro" id="IPR018244">
    <property type="entry name" value="Allrgn_V5/Tpx1_CS"/>
</dbReference>
<dbReference type="InterPro" id="IPR014044">
    <property type="entry name" value="CAP_dom"/>
</dbReference>
<dbReference type="InterPro" id="IPR035940">
    <property type="entry name" value="CAP_sf"/>
</dbReference>
<dbReference type="InterPro" id="IPR001283">
    <property type="entry name" value="CRISP-related"/>
</dbReference>
<dbReference type="InterPro" id="IPR002413">
    <property type="entry name" value="V5_allergen-like"/>
</dbReference>
<dbReference type="PANTHER" id="PTHR10334">
    <property type="entry name" value="CYSTEINE-RICH SECRETORY PROTEIN-RELATED"/>
    <property type="match status" value="1"/>
</dbReference>
<dbReference type="Pfam" id="PF00188">
    <property type="entry name" value="CAP"/>
    <property type="match status" value="1"/>
</dbReference>
<dbReference type="PRINTS" id="PR00838">
    <property type="entry name" value="V5ALLERGEN"/>
</dbReference>
<dbReference type="PRINTS" id="PR00837">
    <property type="entry name" value="V5TPXLIKE"/>
</dbReference>
<dbReference type="SMART" id="SM00198">
    <property type="entry name" value="SCP"/>
    <property type="match status" value="1"/>
</dbReference>
<dbReference type="SUPFAM" id="SSF55797">
    <property type="entry name" value="PR-1-like"/>
    <property type="match status" value="1"/>
</dbReference>
<dbReference type="PROSITE" id="PS01009">
    <property type="entry name" value="CRISP_1"/>
    <property type="match status" value="1"/>
</dbReference>
<dbReference type="PROSITE" id="PS01010">
    <property type="entry name" value="CRISP_2"/>
    <property type="match status" value="1"/>
</dbReference>
<sequence length="202" mass="22781">NNYCKIKCRSGIHTLCKYGTSTKPNCGKNVVKASGLTKQENLEILKQHNEFRQKVARGLETRGNPGPQPPAKSMNTLVWNDELAQIAQVWANQCNYGHDNCRNSAKYSVGQNIAEGSTSADNFVNVSNMVKMWEDEVKDYQYGSPKNKLNKVGHYTQMVWAKTKEIGCGSEDYIEDGWHRHYLVCNYGPAGNVGNEPIYERK</sequence>